<keyword id="KW-0067">ATP-binding</keyword>
<keyword id="KW-0460">Magnesium</keyword>
<keyword id="KW-0547">Nucleotide-binding</keyword>
<keyword id="KW-0808">Transferase</keyword>
<keyword id="KW-0819">tRNA processing</keyword>
<organism>
    <name type="scientific">Pediococcus pentosaceus (strain ATCC 25745 / CCUG 21536 / LMG 10740 / 183-1w)</name>
    <dbReference type="NCBI Taxonomy" id="278197"/>
    <lineage>
        <taxon>Bacteria</taxon>
        <taxon>Bacillati</taxon>
        <taxon>Bacillota</taxon>
        <taxon>Bacilli</taxon>
        <taxon>Lactobacillales</taxon>
        <taxon>Lactobacillaceae</taxon>
        <taxon>Pediococcus</taxon>
    </lineage>
</organism>
<sequence length="310" mass="35930">MEKVLAIVGPTAVGKTNLSIDIAKKFNGEIISGDSMQVYQKLDIGTAKVTIEEMQGIPHHLIDTKTIHDRFSAADFKETAQKLISEISQRGKLPIVVGGTGFYLQALLRDLELGGSNEDRNQIEAIRTELNQKENDELLSILKTIDLATYENIDRKNRRRIIRAIEVFKVSGQKMSEQQMQPTAVYDDLLIGLNTERSILYQRINHRVNMMLDAGLENEARWLFDETKVPQANKGIGYREWQDYFKNEKTLSETIELIQKDSRHYAKRQLTWFRNKMDVNWYDIIQNPQEQAKIYQKIENWLGVKNELER</sequence>
<gene>
    <name evidence="1" type="primary">miaA</name>
    <name type="ordered locus">PEPE_0736</name>
</gene>
<evidence type="ECO:0000255" key="1">
    <source>
        <dbReference type="HAMAP-Rule" id="MF_00185"/>
    </source>
</evidence>
<accession>Q03G75</accession>
<protein>
    <recommendedName>
        <fullName evidence="1">tRNA dimethylallyltransferase</fullName>
        <ecNumber evidence="1">2.5.1.75</ecNumber>
    </recommendedName>
    <alternativeName>
        <fullName evidence="1">Dimethylallyl diphosphate:tRNA dimethylallyltransferase</fullName>
        <shortName evidence="1">DMAPP:tRNA dimethylallyltransferase</shortName>
        <shortName evidence="1">DMATase</shortName>
    </alternativeName>
    <alternativeName>
        <fullName evidence="1">Isopentenyl-diphosphate:tRNA isopentenyltransferase</fullName>
        <shortName evidence="1">IPP transferase</shortName>
        <shortName evidence="1">IPPT</shortName>
        <shortName evidence="1">IPTase</shortName>
    </alternativeName>
</protein>
<name>MIAA_PEDPA</name>
<dbReference type="EC" id="2.5.1.75" evidence="1"/>
<dbReference type="EMBL" id="CP000422">
    <property type="protein sequence ID" value="ABJ67797.1"/>
    <property type="molecule type" value="Genomic_DNA"/>
</dbReference>
<dbReference type="RefSeq" id="WP_002833528.1">
    <property type="nucleotide sequence ID" value="NC_008525.1"/>
</dbReference>
<dbReference type="SMR" id="Q03G75"/>
<dbReference type="STRING" id="278197.PEPE_0736"/>
<dbReference type="GeneID" id="33062334"/>
<dbReference type="KEGG" id="ppe:PEPE_0736"/>
<dbReference type="eggNOG" id="COG0324">
    <property type="taxonomic scope" value="Bacteria"/>
</dbReference>
<dbReference type="HOGENOM" id="CLU_032616_0_1_9"/>
<dbReference type="OrthoDB" id="9776390at2"/>
<dbReference type="Proteomes" id="UP000000773">
    <property type="component" value="Chromosome"/>
</dbReference>
<dbReference type="GO" id="GO:0005524">
    <property type="term" value="F:ATP binding"/>
    <property type="evidence" value="ECO:0007669"/>
    <property type="project" value="UniProtKB-UniRule"/>
</dbReference>
<dbReference type="GO" id="GO:0052381">
    <property type="term" value="F:tRNA dimethylallyltransferase activity"/>
    <property type="evidence" value="ECO:0007669"/>
    <property type="project" value="UniProtKB-UniRule"/>
</dbReference>
<dbReference type="GO" id="GO:0006400">
    <property type="term" value="P:tRNA modification"/>
    <property type="evidence" value="ECO:0007669"/>
    <property type="project" value="TreeGrafter"/>
</dbReference>
<dbReference type="Gene3D" id="1.10.20.140">
    <property type="match status" value="1"/>
</dbReference>
<dbReference type="Gene3D" id="3.40.50.300">
    <property type="entry name" value="P-loop containing nucleotide triphosphate hydrolases"/>
    <property type="match status" value="1"/>
</dbReference>
<dbReference type="HAMAP" id="MF_00185">
    <property type="entry name" value="IPP_trans"/>
    <property type="match status" value="1"/>
</dbReference>
<dbReference type="InterPro" id="IPR039657">
    <property type="entry name" value="Dimethylallyltransferase"/>
</dbReference>
<dbReference type="InterPro" id="IPR018022">
    <property type="entry name" value="IPT"/>
</dbReference>
<dbReference type="InterPro" id="IPR027417">
    <property type="entry name" value="P-loop_NTPase"/>
</dbReference>
<dbReference type="NCBIfam" id="TIGR00174">
    <property type="entry name" value="miaA"/>
    <property type="match status" value="1"/>
</dbReference>
<dbReference type="PANTHER" id="PTHR11088">
    <property type="entry name" value="TRNA DIMETHYLALLYLTRANSFERASE"/>
    <property type="match status" value="1"/>
</dbReference>
<dbReference type="PANTHER" id="PTHR11088:SF60">
    <property type="entry name" value="TRNA DIMETHYLALLYLTRANSFERASE"/>
    <property type="match status" value="1"/>
</dbReference>
<dbReference type="Pfam" id="PF01715">
    <property type="entry name" value="IPPT"/>
    <property type="match status" value="1"/>
</dbReference>
<dbReference type="SUPFAM" id="SSF52540">
    <property type="entry name" value="P-loop containing nucleoside triphosphate hydrolases"/>
    <property type="match status" value="2"/>
</dbReference>
<feature type="chain" id="PRO_1000020631" description="tRNA dimethylallyltransferase">
    <location>
        <begin position="1"/>
        <end position="310"/>
    </location>
</feature>
<feature type="region of interest" description="Interaction with substrate tRNA" evidence="1">
    <location>
        <begin position="34"/>
        <end position="37"/>
    </location>
</feature>
<feature type="binding site" evidence="1">
    <location>
        <begin position="9"/>
        <end position="16"/>
    </location>
    <ligand>
        <name>ATP</name>
        <dbReference type="ChEBI" id="CHEBI:30616"/>
    </ligand>
</feature>
<feature type="binding site" evidence="1">
    <location>
        <begin position="11"/>
        <end position="16"/>
    </location>
    <ligand>
        <name>substrate</name>
    </ligand>
</feature>
<feature type="site" description="Interaction with substrate tRNA" evidence="1">
    <location>
        <position position="100"/>
    </location>
</feature>
<comment type="function">
    <text evidence="1">Catalyzes the transfer of a dimethylallyl group onto the adenine at position 37 in tRNAs that read codons beginning with uridine, leading to the formation of N6-(dimethylallyl)adenosine (i(6)A).</text>
</comment>
<comment type="catalytic activity">
    <reaction evidence="1">
        <text>adenosine(37) in tRNA + dimethylallyl diphosphate = N(6)-dimethylallyladenosine(37) in tRNA + diphosphate</text>
        <dbReference type="Rhea" id="RHEA:26482"/>
        <dbReference type="Rhea" id="RHEA-COMP:10162"/>
        <dbReference type="Rhea" id="RHEA-COMP:10375"/>
        <dbReference type="ChEBI" id="CHEBI:33019"/>
        <dbReference type="ChEBI" id="CHEBI:57623"/>
        <dbReference type="ChEBI" id="CHEBI:74411"/>
        <dbReference type="ChEBI" id="CHEBI:74415"/>
        <dbReference type="EC" id="2.5.1.75"/>
    </reaction>
</comment>
<comment type="cofactor">
    <cofactor evidence="1">
        <name>Mg(2+)</name>
        <dbReference type="ChEBI" id="CHEBI:18420"/>
    </cofactor>
</comment>
<comment type="subunit">
    <text evidence="1">Monomer.</text>
</comment>
<comment type="similarity">
    <text evidence="1">Belongs to the IPP transferase family.</text>
</comment>
<proteinExistence type="inferred from homology"/>
<reference key="1">
    <citation type="journal article" date="2006" name="Proc. Natl. Acad. Sci. U.S.A.">
        <title>Comparative genomics of the lactic acid bacteria.</title>
        <authorList>
            <person name="Makarova K.S."/>
            <person name="Slesarev A."/>
            <person name="Wolf Y.I."/>
            <person name="Sorokin A."/>
            <person name="Mirkin B."/>
            <person name="Koonin E.V."/>
            <person name="Pavlov A."/>
            <person name="Pavlova N."/>
            <person name="Karamychev V."/>
            <person name="Polouchine N."/>
            <person name="Shakhova V."/>
            <person name="Grigoriev I."/>
            <person name="Lou Y."/>
            <person name="Rohksar D."/>
            <person name="Lucas S."/>
            <person name="Huang K."/>
            <person name="Goodstein D.M."/>
            <person name="Hawkins T."/>
            <person name="Plengvidhya V."/>
            <person name="Welker D."/>
            <person name="Hughes J."/>
            <person name="Goh Y."/>
            <person name="Benson A."/>
            <person name="Baldwin K."/>
            <person name="Lee J.-H."/>
            <person name="Diaz-Muniz I."/>
            <person name="Dosti B."/>
            <person name="Smeianov V."/>
            <person name="Wechter W."/>
            <person name="Barabote R."/>
            <person name="Lorca G."/>
            <person name="Altermann E."/>
            <person name="Barrangou R."/>
            <person name="Ganesan B."/>
            <person name="Xie Y."/>
            <person name="Rawsthorne H."/>
            <person name="Tamir D."/>
            <person name="Parker C."/>
            <person name="Breidt F."/>
            <person name="Broadbent J.R."/>
            <person name="Hutkins R."/>
            <person name="O'Sullivan D."/>
            <person name="Steele J."/>
            <person name="Unlu G."/>
            <person name="Saier M.H. Jr."/>
            <person name="Klaenhammer T."/>
            <person name="Richardson P."/>
            <person name="Kozyavkin S."/>
            <person name="Weimer B.C."/>
            <person name="Mills D.A."/>
        </authorList>
    </citation>
    <scope>NUCLEOTIDE SEQUENCE [LARGE SCALE GENOMIC DNA]</scope>
    <source>
        <strain>ATCC 25745 / CCUG 21536 / LMG 10740 / 183-1w</strain>
    </source>
</reference>